<accession>O95388</accession>
<accession>A8KAG6</accession>
<accession>E7EMM5</accession>
<accession>Q5JBS6</accession>
<accession>Q5JBS7</accession>
<accession>Q5JBS8</accession>
<accession>Q9HCS3</accession>
<evidence type="ECO:0000250" key="1"/>
<evidence type="ECO:0000255" key="2"/>
<evidence type="ECO:0000255" key="3">
    <source>
        <dbReference type="PROSITE-ProRule" id="PRU00039"/>
    </source>
</evidence>
<evidence type="ECO:0000255" key="4">
    <source>
        <dbReference type="PROSITE-ProRule" id="PRU00210"/>
    </source>
</evidence>
<evidence type="ECO:0000255" key="5">
    <source>
        <dbReference type="PROSITE-ProRule" id="PRU00220"/>
    </source>
</evidence>
<evidence type="ECO:0000255" key="6">
    <source>
        <dbReference type="PROSITE-ProRule" id="PRU00653"/>
    </source>
</evidence>
<evidence type="ECO:0000269" key="7">
    <source>
    </source>
</evidence>
<evidence type="ECO:0000269" key="8">
    <source>
    </source>
</evidence>
<evidence type="ECO:0000303" key="9">
    <source>
    </source>
</evidence>
<evidence type="ECO:0000303" key="10">
    <source>
    </source>
</evidence>
<evidence type="ECO:0000303" key="11">
    <source ref="3"/>
</evidence>
<evidence type="ECO:0000305" key="12"/>
<evidence type="ECO:0000312" key="13">
    <source>
        <dbReference type="HGNC" id="HGNC:12769"/>
    </source>
</evidence>
<feature type="signal peptide" evidence="2">
    <location>
        <begin position="1"/>
        <end position="22"/>
    </location>
</feature>
<feature type="chain" id="PRO_0000014406" description="CCN family member 4">
    <location>
        <begin position="23"/>
        <end position="367"/>
    </location>
</feature>
<feature type="domain" description="IGFBP N-terminal" evidence="6">
    <location>
        <begin position="45"/>
        <end position="118"/>
    </location>
</feature>
<feature type="domain" description="VWFC" evidence="5">
    <location>
        <begin position="121"/>
        <end position="186"/>
    </location>
</feature>
<feature type="domain" description="TSP type-1" evidence="4">
    <location>
        <begin position="215"/>
        <end position="260"/>
    </location>
</feature>
<feature type="domain" description="CTCK" evidence="3">
    <location>
        <begin position="273"/>
        <end position="347"/>
    </location>
</feature>
<feature type="glycosylation site" description="N-linked (GlcNAc...) asparagine" evidence="2">
    <location>
        <position position="86"/>
    </location>
</feature>
<feature type="glycosylation site" description="N-linked (GlcNAc...) asparagine" evidence="2">
    <location>
        <position position="143"/>
    </location>
</feature>
<feature type="glycosylation site" description="N-linked (GlcNAc...) asparagine" evidence="2">
    <location>
        <position position="284"/>
    </location>
</feature>
<feature type="glycosylation site" description="N-linked (GlcNAc...) asparagine" evidence="2">
    <location>
        <position position="343"/>
    </location>
</feature>
<feature type="disulfide bond" evidence="6">
    <location>
        <begin position="49"/>
        <end position="73"/>
    </location>
</feature>
<feature type="disulfide bond" evidence="6">
    <location>
        <begin position="53"/>
        <end position="75"/>
    </location>
</feature>
<feature type="disulfide bond" evidence="6">
    <location>
        <begin position="55"/>
        <end position="76"/>
    </location>
</feature>
<feature type="disulfide bond" evidence="6">
    <location>
        <begin position="62"/>
        <end position="79"/>
    </location>
</feature>
<feature type="disulfide bond" evidence="6">
    <location>
        <begin position="87"/>
        <end position="101"/>
    </location>
</feature>
<feature type="disulfide bond" evidence="6">
    <location>
        <begin position="93"/>
        <end position="115"/>
    </location>
</feature>
<feature type="disulfide bond" evidence="1">
    <location>
        <begin position="273"/>
        <end position="310"/>
    </location>
</feature>
<feature type="disulfide bond" evidence="1">
    <location>
        <begin position="290"/>
        <end position="324"/>
    </location>
</feature>
<feature type="disulfide bond" evidence="1">
    <location>
        <begin position="301"/>
        <end position="340"/>
    </location>
</feature>
<feature type="disulfide bond" evidence="1">
    <location>
        <begin position="304"/>
        <end position="342"/>
    </location>
</feature>
<feature type="disulfide bond" evidence="1">
    <location>
        <begin position="309"/>
        <end position="346"/>
    </location>
</feature>
<feature type="splice variant" id="VSP_047706" description="In isoform 5." evidence="10 11">
    <original>MRWFLPWTLAAVTAAAASTVLATALSPAPTT</original>
    <variation>MPVPLTSRHEVVPALDAGSSDSSSRQHRPGH</variation>
    <location>
        <begin position="1"/>
        <end position="31"/>
    </location>
</feature>
<feature type="splice variant" id="VSP_042010" description="In isoform 3." evidence="11">
    <location>
        <begin position="24"/>
        <end position="268"/>
    </location>
</feature>
<feature type="splice variant" id="VSP_047707" description="In isoform 5." evidence="10 11">
    <location>
        <begin position="32"/>
        <end position="203"/>
    </location>
</feature>
<feature type="splice variant" id="VSP_045958" description="In isoform 4." evidence="11">
    <original>QVVGVGCVLDGVRYNNGQSFQPNCKYNCTCIDGAVGCTP</original>
    <variation>RREEVSGCVPARGIHELHTCGLHQHTLLSTQVLWSLHGQ</variation>
    <location>
        <begin position="117"/>
        <end position="155"/>
    </location>
</feature>
<feature type="splice variant" id="VSP_008008" description="In isoform 2." evidence="9">
    <original>Q</original>
    <variation>H</variation>
    <location>
        <position position="117"/>
    </location>
</feature>
<feature type="splice variant" id="VSP_008009" description="In isoform 2." evidence="9">
    <location>
        <begin position="118"/>
        <end position="204"/>
    </location>
</feature>
<feature type="splice variant" id="VSP_045959" description="In isoform 4." evidence="11">
    <location>
        <begin position="156"/>
        <end position="367"/>
    </location>
</feature>
<feature type="sequence variant" id="VAR_061265" description="In dbSNP:rs35513885.">
    <original>A</original>
    <variation>S</variation>
    <location>
        <position position="205"/>
    </location>
</feature>
<feature type="sequence conflict" description="In Ref. 3; AAP43926." evidence="12" ref="3">
    <original>A</original>
    <variation>V</variation>
    <location>
        <position position="91"/>
    </location>
</feature>
<feature type="sequence conflict" description="In Ref. 3; AAP43926." evidence="12" ref="3">
    <original>Q</original>
    <variation>QQVLHPLQV</variation>
    <location sequence="O95388-4">
        <position position="155"/>
    </location>
</feature>
<reference key="1">
    <citation type="journal article" date="1998" name="Proc. Natl. Acad. Sci. U.S.A.">
        <title>WISP genes are members of the connective tissue growth factor family that are up-regulated in wnt-1-transformed cells and aberrantly expressed in human colon tumors.</title>
        <authorList>
            <person name="Pennica D."/>
            <person name="Swanson T.A."/>
            <person name="Welsh J.W."/>
            <person name="Roy M.A."/>
            <person name="Lawrence D.A."/>
            <person name="Lee J."/>
            <person name="Brush J."/>
            <person name="Taneyhill L.A."/>
            <person name="Deuel B."/>
            <person name="Lew M."/>
            <person name="Watanabe C."/>
            <person name="Cohen R.L."/>
            <person name="Melham M.F."/>
            <person name="Finley G.G."/>
            <person name="Quirke P."/>
            <person name="Goddard A.D."/>
            <person name="Hillan K.J."/>
            <person name="Gurney A.L."/>
            <person name="Botstein D."/>
            <person name="Levine A.J."/>
        </authorList>
    </citation>
    <scope>NUCLEOTIDE SEQUENCE [MRNA] (ISOFORM 1)</scope>
    <source>
        <tissue>Fetal kidney</tissue>
        <tissue>Lung</tissue>
    </source>
</reference>
<reference key="2">
    <citation type="journal article" date="2001" name="Oncogene">
        <title>A novel variant of WISP1 lacking a Von Willebrand type C module overexpressed in scirrhous gastric carcinoma.</title>
        <authorList>
            <person name="Tanaka S."/>
            <person name="Sugimachi K."/>
            <person name="Saeki H."/>
            <person name="Kinoshita J."/>
            <person name="Ohga T."/>
            <person name="Shimada M."/>
            <person name="Maehara Y."/>
            <person name="Sugimachi K."/>
        </authorList>
    </citation>
    <scope>NUCLEOTIDE SEQUENCE [MRNA] (ISOFORM 2)</scope>
    <source>
        <tissue>Gastric carcinoma</tissue>
    </source>
</reference>
<reference key="3">
    <citation type="submission" date="2002-12" db="EMBL/GenBank/DDBJ databases">
        <title>Multiple alternatively spliced variants of WISP1 are overexpressed in pancreatic cancer.</title>
        <authorList>
            <person name="Li Z."/>
            <person name="Chiao P.J."/>
            <person name="Evans D.B."/>
        </authorList>
    </citation>
    <scope>NUCLEOTIDE SEQUENCE [MRNA] (ISOFORMS 3; 4 AND 5)</scope>
</reference>
<reference key="4">
    <citation type="journal article" date="2004" name="Nat. Genet.">
        <title>Complete sequencing and characterization of 21,243 full-length human cDNAs.</title>
        <authorList>
            <person name="Ota T."/>
            <person name="Suzuki Y."/>
            <person name="Nishikawa T."/>
            <person name="Otsuki T."/>
            <person name="Sugiyama T."/>
            <person name="Irie R."/>
            <person name="Wakamatsu A."/>
            <person name="Hayashi K."/>
            <person name="Sato H."/>
            <person name="Nagai K."/>
            <person name="Kimura K."/>
            <person name="Makita H."/>
            <person name="Sekine M."/>
            <person name="Obayashi M."/>
            <person name="Nishi T."/>
            <person name="Shibahara T."/>
            <person name="Tanaka T."/>
            <person name="Ishii S."/>
            <person name="Yamamoto J."/>
            <person name="Saito K."/>
            <person name="Kawai Y."/>
            <person name="Isono Y."/>
            <person name="Nakamura Y."/>
            <person name="Nagahari K."/>
            <person name="Murakami K."/>
            <person name="Yasuda T."/>
            <person name="Iwayanagi T."/>
            <person name="Wagatsuma M."/>
            <person name="Shiratori A."/>
            <person name="Sudo H."/>
            <person name="Hosoiri T."/>
            <person name="Kaku Y."/>
            <person name="Kodaira H."/>
            <person name="Kondo H."/>
            <person name="Sugawara M."/>
            <person name="Takahashi M."/>
            <person name="Kanda K."/>
            <person name="Yokoi T."/>
            <person name="Furuya T."/>
            <person name="Kikkawa E."/>
            <person name="Omura Y."/>
            <person name="Abe K."/>
            <person name="Kamihara K."/>
            <person name="Katsuta N."/>
            <person name="Sato K."/>
            <person name="Tanikawa M."/>
            <person name="Yamazaki M."/>
            <person name="Ninomiya K."/>
            <person name="Ishibashi T."/>
            <person name="Yamashita H."/>
            <person name="Murakawa K."/>
            <person name="Fujimori K."/>
            <person name="Tanai H."/>
            <person name="Kimata M."/>
            <person name="Watanabe M."/>
            <person name="Hiraoka S."/>
            <person name="Chiba Y."/>
            <person name="Ishida S."/>
            <person name="Ono Y."/>
            <person name="Takiguchi S."/>
            <person name="Watanabe S."/>
            <person name="Yosida M."/>
            <person name="Hotuta T."/>
            <person name="Kusano J."/>
            <person name="Kanehori K."/>
            <person name="Takahashi-Fujii A."/>
            <person name="Hara H."/>
            <person name="Tanase T.-O."/>
            <person name="Nomura Y."/>
            <person name="Togiya S."/>
            <person name="Komai F."/>
            <person name="Hara R."/>
            <person name="Takeuchi K."/>
            <person name="Arita M."/>
            <person name="Imose N."/>
            <person name="Musashino K."/>
            <person name="Yuuki H."/>
            <person name="Oshima A."/>
            <person name="Sasaki N."/>
            <person name="Aotsuka S."/>
            <person name="Yoshikawa Y."/>
            <person name="Matsunawa H."/>
            <person name="Ichihara T."/>
            <person name="Shiohata N."/>
            <person name="Sano S."/>
            <person name="Moriya S."/>
            <person name="Momiyama H."/>
            <person name="Satoh N."/>
            <person name="Takami S."/>
            <person name="Terashima Y."/>
            <person name="Suzuki O."/>
            <person name="Nakagawa S."/>
            <person name="Senoh A."/>
            <person name="Mizoguchi H."/>
            <person name="Goto Y."/>
            <person name="Shimizu F."/>
            <person name="Wakebe H."/>
            <person name="Hishigaki H."/>
            <person name="Watanabe T."/>
            <person name="Sugiyama A."/>
            <person name="Takemoto M."/>
            <person name="Kawakami B."/>
            <person name="Yamazaki M."/>
            <person name="Watanabe K."/>
            <person name="Kumagai A."/>
            <person name="Itakura S."/>
            <person name="Fukuzumi Y."/>
            <person name="Fujimori Y."/>
            <person name="Komiyama M."/>
            <person name="Tashiro H."/>
            <person name="Tanigami A."/>
            <person name="Fujiwara T."/>
            <person name="Ono T."/>
            <person name="Yamada K."/>
            <person name="Fujii Y."/>
            <person name="Ozaki K."/>
            <person name="Hirao M."/>
            <person name="Ohmori Y."/>
            <person name="Kawabata A."/>
            <person name="Hikiji T."/>
            <person name="Kobatake N."/>
            <person name="Inagaki H."/>
            <person name="Ikema Y."/>
            <person name="Okamoto S."/>
            <person name="Okitani R."/>
            <person name="Kawakami T."/>
            <person name="Noguchi S."/>
            <person name="Itoh T."/>
            <person name="Shigeta K."/>
            <person name="Senba T."/>
            <person name="Matsumura K."/>
            <person name="Nakajima Y."/>
            <person name="Mizuno T."/>
            <person name="Morinaga M."/>
            <person name="Sasaki M."/>
            <person name="Togashi T."/>
            <person name="Oyama M."/>
            <person name="Hata H."/>
            <person name="Watanabe M."/>
            <person name="Komatsu T."/>
            <person name="Mizushima-Sugano J."/>
            <person name="Satoh T."/>
            <person name="Shirai Y."/>
            <person name="Takahashi Y."/>
            <person name="Nakagawa K."/>
            <person name="Okumura K."/>
            <person name="Nagase T."/>
            <person name="Nomura N."/>
            <person name="Kikuchi H."/>
            <person name="Masuho Y."/>
            <person name="Yamashita R."/>
            <person name="Nakai K."/>
            <person name="Yada T."/>
            <person name="Nakamura Y."/>
            <person name="Ohara O."/>
            <person name="Isogai T."/>
            <person name="Sugano S."/>
        </authorList>
    </citation>
    <scope>NUCLEOTIDE SEQUENCE [LARGE SCALE MRNA] (ISOFORMS 1 AND 5)</scope>
    <source>
        <tissue>Synovium</tissue>
        <tissue>Uterus</tissue>
    </source>
</reference>
<reference key="5">
    <citation type="journal article" date="2006" name="Nature">
        <title>DNA sequence and analysis of human chromosome 8.</title>
        <authorList>
            <person name="Nusbaum C."/>
            <person name="Mikkelsen T.S."/>
            <person name="Zody M.C."/>
            <person name="Asakawa S."/>
            <person name="Taudien S."/>
            <person name="Garber M."/>
            <person name="Kodira C.D."/>
            <person name="Schueler M.G."/>
            <person name="Shimizu A."/>
            <person name="Whittaker C.A."/>
            <person name="Chang J.L."/>
            <person name="Cuomo C.A."/>
            <person name="Dewar K."/>
            <person name="FitzGerald M.G."/>
            <person name="Yang X."/>
            <person name="Allen N.R."/>
            <person name="Anderson S."/>
            <person name="Asakawa T."/>
            <person name="Blechschmidt K."/>
            <person name="Bloom T."/>
            <person name="Borowsky M.L."/>
            <person name="Butler J."/>
            <person name="Cook A."/>
            <person name="Corum B."/>
            <person name="DeArellano K."/>
            <person name="DeCaprio D."/>
            <person name="Dooley K.T."/>
            <person name="Dorris L. III"/>
            <person name="Engels R."/>
            <person name="Gloeckner G."/>
            <person name="Hafez N."/>
            <person name="Hagopian D.S."/>
            <person name="Hall J.L."/>
            <person name="Ishikawa S.K."/>
            <person name="Jaffe D.B."/>
            <person name="Kamat A."/>
            <person name="Kudoh J."/>
            <person name="Lehmann R."/>
            <person name="Lokitsang T."/>
            <person name="Macdonald P."/>
            <person name="Major J.E."/>
            <person name="Matthews C.D."/>
            <person name="Mauceli E."/>
            <person name="Menzel U."/>
            <person name="Mihalev A.H."/>
            <person name="Minoshima S."/>
            <person name="Murayama Y."/>
            <person name="Naylor J.W."/>
            <person name="Nicol R."/>
            <person name="Nguyen C."/>
            <person name="O'Leary S.B."/>
            <person name="O'Neill K."/>
            <person name="Parker S.C.J."/>
            <person name="Polley A."/>
            <person name="Raymond C.K."/>
            <person name="Reichwald K."/>
            <person name="Rodriguez J."/>
            <person name="Sasaki T."/>
            <person name="Schilhabel M."/>
            <person name="Siddiqui R."/>
            <person name="Smith C.L."/>
            <person name="Sneddon T.P."/>
            <person name="Talamas J.A."/>
            <person name="Tenzin P."/>
            <person name="Topham K."/>
            <person name="Venkataraman V."/>
            <person name="Wen G."/>
            <person name="Yamazaki S."/>
            <person name="Young S.K."/>
            <person name="Zeng Q."/>
            <person name="Zimmer A.R."/>
            <person name="Rosenthal A."/>
            <person name="Birren B.W."/>
            <person name="Platzer M."/>
            <person name="Shimizu N."/>
            <person name="Lander E.S."/>
        </authorList>
    </citation>
    <scope>NUCLEOTIDE SEQUENCE [LARGE SCALE GENOMIC DNA]</scope>
</reference>
<reference key="6">
    <citation type="submission" date="2005-07" db="EMBL/GenBank/DDBJ databases">
        <authorList>
            <person name="Mural R.J."/>
            <person name="Istrail S."/>
            <person name="Sutton G.G."/>
            <person name="Florea L."/>
            <person name="Halpern A.L."/>
            <person name="Mobarry C.M."/>
            <person name="Lippert R."/>
            <person name="Walenz B."/>
            <person name="Shatkay H."/>
            <person name="Dew I."/>
            <person name="Miller J.R."/>
            <person name="Flanigan M.J."/>
            <person name="Edwards N.J."/>
            <person name="Bolanos R."/>
            <person name="Fasulo D."/>
            <person name="Halldorsson B.V."/>
            <person name="Hannenhalli S."/>
            <person name="Turner R."/>
            <person name="Yooseph S."/>
            <person name="Lu F."/>
            <person name="Nusskern D.R."/>
            <person name="Shue B.C."/>
            <person name="Zheng X.H."/>
            <person name="Zhong F."/>
            <person name="Delcher A.L."/>
            <person name="Huson D.H."/>
            <person name="Kravitz S.A."/>
            <person name="Mouchard L."/>
            <person name="Reinert K."/>
            <person name="Remington K.A."/>
            <person name="Clark A.G."/>
            <person name="Waterman M.S."/>
            <person name="Eichler E.E."/>
            <person name="Adams M.D."/>
            <person name="Hunkapiller M.W."/>
            <person name="Myers E.W."/>
            <person name="Venter J.C."/>
        </authorList>
    </citation>
    <scope>NUCLEOTIDE SEQUENCE [LARGE SCALE GENOMIC DNA]</scope>
</reference>
<reference key="7">
    <citation type="journal article" date="2004" name="Genome Res.">
        <title>The status, quality, and expansion of the NIH full-length cDNA project: the Mammalian Gene Collection (MGC).</title>
        <authorList>
            <consortium name="The MGC Project Team"/>
        </authorList>
    </citation>
    <scope>NUCLEOTIDE SEQUENCE [LARGE SCALE MRNA] (ISOFORM 1)</scope>
    <source>
        <tissue>Lung</tissue>
    </source>
</reference>
<reference key="8">
    <citation type="journal article" date="2000" name="Genes Dev.">
        <title>WISP-1 is a Wnt-1- and beta-catenin-responsive oncogene.</title>
        <authorList>
            <person name="Xu L."/>
            <person name="Corcoran R.B."/>
            <person name="Welsh J.W."/>
            <person name="Pennica D."/>
            <person name="Levine A.J."/>
        </authorList>
    </citation>
    <scope>FUNCTION IN WNT1 SIGNALING</scope>
</reference>
<reference key="9">
    <citation type="journal article" date="2002" name="Genes Dev.">
        <title>WISP-1 attenuates p53-mediated apoptosis in response to DNA damage through activation of the Akt kinase.</title>
        <authorList>
            <person name="Su F."/>
            <person name="Overholtzer M."/>
            <person name="Besser D."/>
            <person name="Levine A.J."/>
        </authorList>
    </citation>
    <scope>FUNCTION IN TP53-MEDIATED APOPTOSIS</scope>
</reference>
<reference key="10">
    <citation type="journal article" date="2001" name="J. Biol. Chem.">
        <title>WISP-1 binds to decorin and biglycan.</title>
        <authorList>
            <person name="Desnoyers L."/>
            <person name="Arnott D."/>
            <person name="Pennica D."/>
        </authorList>
    </citation>
    <scope>INTERACTION WITH DECORIN AND BIGLYCAN</scope>
</reference>
<organism>
    <name type="scientific">Homo sapiens</name>
    <name type="common">Human</name>
    <dbReference type="NCBI Taxonomy" id="9606"/>
    <lineage>
        <taxon>Eukaryota</taxon>
        <taxon>Metazoa</taxon>
        <taxon>Chordata</taxon>
        <taxon>Craniata</taxon>
        <taxon>Vertebrata</taxon>
        <taxon>Euteleostomi</taxon>
        <taxon>Mammalia</taxon>
        <taxon>Eutheria</taxon>
        <taxon>Euarchontoglires</taxon>
        <taxon>Primates</taxon>
        <taxon>Haplorrhini</taxon>
        <taxon>Catarrhini</taxon>
        <taxon>Hominidae</taxon>
        <taxon>Homo</taxon>
    </lineage>
</organism>
<sequence>MRWFLPWTLAAVTAAAASTVLATALSPAPTTMDFTPAPLEDTSSRPQFCKWPCECPPSPPRCPLGVSLITDGCECCKMCAQQLGDNCTEAAICDPHRGLYCDYSGDRPRYAIGVCAQVVGVGCVLDGVRYNNGQSFQPNCKYNCTCIDGAVGCTPLCLRVRPPRLWCPHPRRVSIPGHCCEQWVCEDDAKRPRKTAPRDTGAFDAVGEVEAWHRNCIAYTSPWSPCSTSCGLGVSTRISNVNAQCWPEQESRLCNLRPCDVDIHTLIKAGKKCLAVYQPEASMNFTLAGCISTRSYQPKYCGVCMDNRCCIPYKSKTIDVSFQCPDGLGFSRQVLWINACFCNLSCRNPNDIFADLESYPDFSEIAN</sequence>
<name>CCN4_HUMAN</name>
<protein>
    <recommendedName>
        <fullName evidence="12">CCN family member 4</fullName>
    </recommendedName>
    <alternativeName>
        <fullName>WNT1-inducible-signaling pathway protein 1</fullName>
        <shortName>WISP-1</shortName>
    </alternativeName>
    <alternativeName>
        <fullName>Wnt-1-induced secreted protein</fullName>
    </alternativeName>
</protein>
<dbReference type="EMBL" id="AF100779">
    <property type="protein sequence ID" value="AAC96321.1"/>
    <property type="molecule type" value="mRNA"/>
</dbReference>
<dbReference type="EMBL" id="AB034725">
    <property type="protein sequence ID" value="BAB17849.1"/>
    <property type="molecule type" value="mRNA"/>
</dbReference>
<dbReference type="EMBL" id="AY196486">
    <property type="protein sequence ID" value="AAP43924.1"/>
    <property type="molecule type" value="mRNA"/>
</dbReference>
<dbReference type="EMBL" id="AY196487">
    <property type="protein sequence ID" value="AAP43925.1"/>
    <property type="molecule type" value="mRNA"/>
</dbReference>
<dbReference type="EMBL" id="AY196488">
    <property type="protein sequence ID" value="AAP43926.1"/>
    <property type="molecule type" value="mRNA"/>
</dbReference>
<dbReference type="EMBL" id="AK293031">
    <property type="protein sequence ID" value="BAF85720.1"/>
    <property type="molecule type" value="mRNA"/>
</dbReference>
<dbReference type="EMBL" id="AK301508">
    <property type="protein sequence ID" value="BAG63017.1"/>
    <property type="molecule type" value="mRNA"/>
</dbReference>
<dbReference type="EMBL" id="AF192304">
    <property type="status" value="NOT_ANNOTATED_CDS"/>
    <property type="molecule type" value="Genomic_DNA"/>
</dbReference>
<dbReference type="EMBL" id="CH471060">
    <property type="protein sequence ID" value="EAW92162.1"/>
    <property type="molecule type" value="Genomic_DNA"/>
</dbReference>
<dbReference type="EMBL" id="BC074840">
    <property type="protein sequence ID" value="AAH74840.1"/>
    <property type="molecule type" value="mRNA"/>
</dbReference>
<dbReference type="EMBL" id="BC074841">
    <property type="protein sequence ID" value="AAH74841.1"/>
    <property type="molecule type" value="mRNA"/>
</dbReference>
<dbReference type="CCDS" id="CCDS56555.1">
    <molecule id="O95388-4"/>
</dbReference>
<dbReference type="CCDS" id="CCDS56556.1">
    <molecule id="O95388-3"/>
</dbReference>
<dbReference type="CCDS" id="CCDS6371.1">
    <molecule id="O95388-1"/>
</dbReference>
<dbReference type="CCDS" id="CCDS6372.1">
    <molecule id="O95388-2"/>
</dbReference>
<dbReference type="RefSeq" id="NP_001191798.1">
    <molecule id="O95388-4"/>
    <property type="nucleotide sequence ID" value="NM_001204869.2"/>
</dbReference>
<dbReference type="RefSeq" id="NP_001191799.1">
    <molecule id="O95388-3"/>
    <property type="nucleotide sequence ID" value="NM_001204870.2"/>
</dbReference>
<dbReference type="RefSeq" id="NP_003873.1">
    <molecule id="O95388-1"/>
    <property type="nucleotide sequence ID" value="NM_003882.4"/>
</dbReference>
<dbReference type="RefSeq" id="NP_543028.1">
    <molecule id="O95388-2"/>
    <property type="nucleotide sequence ID" value="NM_080838.3"/>
</dbReference>
<dbReference type="SMR" id="O95388"/>
<dbReference type="BioGRID" id="114367">
    <property type="interactions" value="4"/>
</dbReference>
<dbReference type="FunCoup" id="O95388">
    <property type="interactions" value="239"/>
</dbReference>
<dbReference type="IntAct" id="O95388">
    <property type="interactions" value="4"/>
</dbReference>
<dbReference type="MINT" id="O95388"/>
<dbReference type="STRING" id="9606.ENSP00000250160"/>
<dbReference type="GlyCosmos" id="O95388">
    <property type="glycosylation" value="5 sites, 1 glycan"/>
</dbReference>
<dbReference type="GlyGen" id="O95388">
    <property type="glycosylation" value="5 sites, 1 O-linked glycan (1 site)"/>
</dbReference>
<dbReference type="iPTMnet" id="O95388"/>
<dbReference type="PhosphoSitePlus" id="O95388"/>
<dbReference type="BioMuta" id="WISP1"/>
<dbReference type="MassIVE" id="O95388"/>
<dbReference type="PaxDb" id="9606-ENSP00000250160"/>
<dbReference type="PeptideAtlas" id="O95388"/>
<dbReference type="ProteomicsDB" id="16974"/>
<dbReference type="ProteomicsDB" id="50837">
    <molecule id="O95388-1"/>
</dbReference>
<dbReference type="ProteomicsDB" id="50838">
    <molecule id="O95388-2"/>
</dbReference>
<dbReference type="ProteomicsDB" id="50839">
    <molecule id="O95388-3"/>
</dbReference>
<dbReference type="ProteomicsDB" id="62990"/>
<dbReference type="Antibodypedia" id="1567">
    <property type="antibodies" value="335 antibodies from 34 providers"/>
</dbReference>
<dbReference type="DNASU" id="8840"/>
<dbReference type="Ensembl" id="ENST00000220856.6">
    <molecule id="O95388-2"/>
    <property type="protein sequence ID" value="ENSP00000220856.6"/>
    <property type="gene ID" value="ENSG00000104415.14"/>
</dbReference>
<dbReference type="Ensembl" id="ENST00000250160.11">
    <molecule id="O95388-1"/>
    <property type="protein sequence ID" value="ENSP00000250160.5"/>
    <property type="gene ID" value="ENSG00000104415.14"/>
</dbReference>
<dbReference type="Ensembl" id="ENST00000517423.5">
    <molecule id="O95388-4"/>
    <property type="protein sequence ID" value="ENSP00000427744.1"/>
    <property type="gene ID" value="ENSG00000104415.14"/>
</dbReference>
<dbReference type="Ensembl" id="ENST00000519433.1">
    <molecule id="O95388-3"/>
    <property type="protein sequence ID" value="ENSP00000429185.1"/>
    <property type="gene ID" value="ENSG00000104415.14"/>
</dbReference>
<dbReference type="GeneID" id="8840"/>
<dbReference type="KEGG" id="hsa:8840"/>
<dbReference type="MANE-Select" id="ENST00000250160.11">
    <property type="protein sequence ID" value="ENSP00000250160.5"/>
    <property type="RefSeq nucleotide sequence ID" value="NM_003882.4"/>
    <property type="RefSeq protein sequence ID" value="NP_003873.1"/>
</dbReference>
<dbReference type="UCSC" id="uc003yub.4">
    <molecule id="O95388-1"/>
    <property type="organism name" value="human"/>
</dbReference>
<dbReference type="AGR" id="HGNC:12769"/>
<dbReference type="CTD" id="8840"/>
<dbReference type="DisGeNET" id="8840"/>
<dbReference type="GeneCards" id="CCN4"/>
<dbReference type="HGNC" id="HGNC:12769">
    <property type="gene designation" value="CCN4"/>
</dbReference>
<dbReference type="HPA" id="ENSG00000104415">
    <property type="expression patterns" value="Tissue enhanced (ovary)"/>
</dbReference>
<dbReference type="MIM" id="603398">
    <property type="type" value="gene"/>
</dbReference>
<dbReference type="neXtProt" id="NX_O95388"/>
<dbReference type="OpenTargets" id="ENSG00000104415"/>
<dbReference type="PharmGKB" id="PA37372"/>
<dbReference type="VEuPathDB" id="HostDB:ENSG00000104415"/>
<dbReference type="eggNOG" id="ENOG502QQQQ">
    <property type="taxonomic scope" value="Eukaryota"/>
</dbReference>
<dbReference type="GeneTree" id="ENSGT00940000158587"/>
<dbReference type="HOGENOM" id="CLU_063247_3_1_1"/>
<dbReference type="InParanoid" id="O95388"/>
<dbReference type="OMA" id="RKIMWIN"/>
<dbReference type="OrthoDB" id="365605at2759"/>
<dbReference type="PAN-GO" id="O95388">
    <property type="GO annotations" value="6 GO annotations based on evolutionary models"/>
</dbReference>
<dbReference type="PhylomeDB" id="O95388"/>
<dbReference type="TreeFam" id="TF326070"/>
<dbReference type="PathwayCommons" id="O95388"/>
<dbReference type="SignaLink" id="O95388"/>
<dbReference type="SIGNOR" id="O95388"/>
<dbReference type="BioGRID-ORCS" id="8840">
    <property type="hits" value="13 hits in 1140 CRISPR screens"/>
</dbReference>
<dbReference type="ChiTaRS" id="WISP1">
    <property type="organism name" value="human"/>
</dbReference>
<dbReference type="GeneWiki" id="WNT1-inducible-signaling_pathway_protein_1"/>
<dbReference type="GenomeRNAi" id="8840"/>
<dbReference type="Pharos" id="O95388">
    <property type="development level" value="Tbio"/>
</dbReference>
<dbReference type="PRO" id="PR:O95388"/>
<dbReference type="Proteomes" id="UP000005640">
    <property type="component" value="Chromosome 8"/>
</dbReference>
<dbReference type="RNAct" id="O95388">
    <property type="molecule type" value="protein"/>
</dbReference>
<dbReference type="Bgee" id="ENSG00000104415">
    <property type="expression patterns" value="Expressed in cartilage tissue and 113 other cell types or tissues"/>
</dbReference>
<dbReference type="ExpressionAtlas" id="O95388">
    <property type="expression patterns" value="baseline and differential"/>
</dbReference>
<dbReference type="GO" id="GO:0005829">
    <property type="term" value="C:cytosol"/>
    <property type="evidence" value="ECO:0000314"/>
    <property type="project" value="HPA"/>
</dbReference>
<dbReference type="GO" id="GO:0031012">
    <property type="term" value="C:extracellular matrix"/>
    <property type="evidence" value="ECO:0000318"/>
    <property type="project" value="GO_Central"/>
</dbReference>
<dbReference type="GO" id="GO:0005615">
    <property type="term" value="C:extracellular space"/>
    <property type="evidence" value="ECO:0000314"/>
    <property type="project" value="UniProtKB"/>
</dbReference>
<dbReference type="GO" id="GO:0008201">
    <property type="term" value="F:heparin binding"/>
    <property type="evidence" value="ECO:0000318"/>
    <property type="project" value="GO_Central"/>
</dbReference>
<dbReference type="GO" id="GO:0005178">
    <property type="term" value="F:integrin binding"/>
    <property type="evidence" value="ECO:0000318"/>
    <property type="project" value="GO_Central"/>
</dbReference>
<dbReference type="GO" id="GO:0060348">
    <property type="term" value="P:bone development"/>
    <property type="evidence" value="ECO:0007669"/>
    <property type="project" value="Ensembl"/>
</dbReference>
<dbReference type="GO" id="GO:0007155">
    <property type="term" value="P:cell adhesion"/>
    <property type="evidence" value="ECO:0000318"/>
    <property type="project" value="GO_Central"/>
</dbReference>
<dbReference type="GO" id="GO:0007267">
    <property type="term" value="P:cell-cell signaling"/>
    <property type="evidence" value="ECO:0000304"/>
    <property type="project" value="ProtInc"/>
</dbReference>
<dbReference type="GO" id="GO:0042593">
    <property type="term" value="P:glucose homeostasis"/>
    <property type="evidence" value="ECO:0007669"/>
    <property type="project" value="Ensembl"/>
</dbReference>
<dbReference type="GO" id="GO:0032331">
    <property type="term" value="P:negative regulation of chondrocyte differentiation"/>
    <property type="evidence" value="ECO:0007669"/>
    <property type="project" value="Ensembl"/>
</dbReference>
<dbReference type="GO" id="GO:0045599">
    <property type="term" value="P:negative regulation of fat cell differentiation"/>
    <property type="evidence" value="ECO:0007669"/>
    <property type="project" value="Ensembl"/>
</dbReference>
<dbReference type="GO" id="GO:0001649">
    <property type="term" value="P:osteoblast differentiation"/>
    <property type="evidence" value="ECO:0007669"/>
    <property type="project" value="Ensembl"/>
</dbReference>
<dbReference type="GO" id="GO:0030316">
    <property type="term" value="P:osteoclast differentiation"/>
    <property type="evidence" value="ECO:0007669"/>
    <property type="project" value="Ensembl"/>
</dbReference>
<dbReference type="GO" id="GO:0045597">
    <property type="term" value="P:positive regulation of cell differentiation"/>
    <property type="evidence" value="ECO:0000318"/>
    <property type="project" value="GO_Central"/>
</dbReference>
<dbReference type="GO" id="GO:0050729">
    <property type="term" value="P:positive regulation of inflammatory response"/>
    <property type="evidence" value="ECO:0000314"/>
    <property type="project" value="UniProtKB"/>
</dbReference>
<dbReference type="GO" id="GO:0045669">
    <property type="term" value="P:positive regulation of osteoblast differentiation"/>
    <property type="evidence" value="ECO:0000315"/>
    <property type="project" value="UniProtKB"/>
</dbReference>
<dbReference type="GO" id="GO:0014911">
    <property type="term" value="P:positive regulation of smooth muscle cell migration"/>
    <property type="evidence" value="ECO:0000250"/>
    <property type="project" value="UniProtKB"/>
</dbReference>
<dbReference type="GO" id="GO:0048661">
    <property type="term" value="P:positive regulation of smooth muscle cell proliferation"/>
    <property type="evidence" value="ECO:0000250"/>
    <property type="project" value="UniProtKB"/>
</dbReference>
<dbReference type="GO" id="GO:0030177">
    <property type="term" value="P:positive regulation of Wnt signaling pathway"/>
    <property type="evidence" value="ECO:0007669"/>
    <property type="project" value="Ensembl"/>
</dbReference>
<dbReference type="GO" id="GO:0090303">
    <property type="term" value="P:positive regulation of wound healing"/>
    <property type="evidence" value="ECO:0007669"/>
    <property type="project" value="Ensembl"/>
</dbReference>
<dbReference type="GO" id="GO:0001817">
    <property type="term" value="P:regulation of cytokine production"/>
    <property type="evidence" value="ECO:0000314"/>
    <property type="project" value="UniProtKB"/>
</dbReference>
<dbReference type="GO" id="GO:0007165">
    <property type="term" value="P:signal transduction"/>
    <property type="evidence" value="ECO:0000318"/>
    <property type="project" value="GO_Central"/>
</dbReference>
<dbReference type="GO" id="GO:0016055">
    <property type="term" value="P:Wnt signaling pathway"/>
    <property type="evidence" value="ECO:0007669"/>
    <property type="project" value="UniProtKB-KW"/>
</dbReference>
<dbReference type="FunFam" id="2.20.100.10:FF:000069">
    <property type="entry name" value="Cellular communication network factor 4"/>
    <property type="match status" value="1"/>
</dbReference>
<dbReference type="Gene3D" id="2.10.70.10">
    <property type="entry name" value="Complement Module, domain 1"/>
    <property type="match status" value="1"/>
</dbReference>
<dbReference type="Gene3D" id="2.20.100.10">
    <property type="entry name" value="Thrombospondin type-1 (TSP1) repeat"/>
    <property type="match status" value="1"/>
</dbReference>
<dbReference type="InterPro" id="IPR050941">
    <property type="entry name" value="CCN"/>
</dbReference>
<dbReference type="InterPro" id="IPR006207">
    <property type="entry name" value="Cys_knot_C"/>
</dbReference>
<dbReference type="InterPro" id="IPR006208">
    <property type="entry name" value="Glyco_hormone_CN"/>
</dbReference>
<dbReference type="InterPro" id="IPR009030">
    <property type="entry name" value="Growth_fac_rcpt_cys_sf"/>
</dbReference>
<dbReference type="InterPro" id="IPR000867">
    <property type="entry name" value="IGFBP-like"/>
</dbReference>
<dbReference type="InterPro" id="IPR012395">
    <property type="entry name" value="IGFBP_CNN"/>
</dbReference>
<dbReference type="InterPro" id="IPR017891">
    <property type="entry name" value="Insulin_GF-bd_Cys-rich_CS"/>
</dbReference>
<dbReference type="InterPro" id="IPR043973">
    <property type="entry name" value="TSP1_CCN"/>
</dbReference>
<dbReference type="InterPro" id="IPR000884">
    <property type="entry name" value="TSP1_rpt"/>
</dbReference>
<dbReference type="InterPro" id="IPR036383">
    <property type="entry name" value="TSP1_rpt_sf"/>
</dbReference>
<dbReference type="InterPro" id="IPR001007">
    <property type="entry name" value="VWF_dom"/>
</dbReference>
<dbReference type="PANTHER" id="PTHR11348:SF4">
    <property type="entry name" value="CCN FAMILY MEMBER 4"/>
    <property type="match status" value="1"/>
</dbReference>
<dbReference type="PANTHER" id="PTHR11348">
    <property type="entry name" value="CONNECTIVE TISSUE GROWTH FACTOR-RELATED"/>
    <property type="match status" value="1"/>
</dbReference>
<dbReference type="Pfam" id="PF00007">
    <property type="entry name" value="Cys_knot"/>
    <property type="match status" value="1"/>
</dbReference>
<dbReference type="Pfam" id="PF00219">
    <property type="entry name" value="IGFBP"/>
    <property type="match status" value="1"/>
</dbReference>
<dbReference type="Pfam" id="PF19035">
    <property type="entry name" value="TSP1_CCN"/>
    <property type="match status" value="1"/>
</dbReference>
<dbReference type="Pfam" id="PF00093">
    <property type="entry name" value="VWC"/>
    <property type="match status" value="1"/>
</dbReference>
<dbReference type="PIRSF" id="PIRSF036495">
    <property type="entry name" value="IGFBP_rP_CNN"/>
    <property type="match status" value="1"/>
</dbReference>
<dbReference type="SMART" id="SM00041">
    <property type="entry name" value="CT"/>
    <property type="match status" value="1"/>
</dbReference>
<dbReference type="SMART" id="SM00121">
    <property type="entry name" value="IB"/>
    <property type="match status" value="1"/>
</dbReference>
<dbReference type="SMART" id="SM00209">
    <property type="entry name" value="TSP1"/>
    <property type="match status" value="1"/>
</dbReference>
<dbReference type="SMART" id="SM00214">
    <property type="entry name" value="VWC"/>
    <property type="match status" value="1"/>
</dbReference>
<dbReference type="SUPFAM" id="SSF57603">
    <property type="entry name" value="FnI-like domain"/>
    <property type="match status" value="1"/>
</dbReference>
<dbReference type="SUPFAM" id="SSF57184">
    <property type="entry name" value="Growth factor receptor domain"/>
    <property type="match status" value="1"/>
</dbReference>
<dbReference type="SUPFAM" id="SSF82895">
    <property type="entry name" value="TSP-1 type 1 repeat"/>
    <property type="match status" value="1"/>
</dbReference>
<dbReference type="PROSITE" id="PS01185">
    <property type="entry name" value="CTCK_1"/>
    <property type="match status" value="1"/>
</dbReference>
<dbReference type="PROSITE" id="PS01225">
    <property type="entry name" value="CTCK_2"/>
    <property type="match status" value="1"/>
</dbReference>
<dbReference type="PROSITE" id="PS00222">
    <property type="entry name" value="IGFBP_N_1"/>
    <property type="match status" value="1"/>
</dbReference>
<dbReference type="PROSITE" id="PS51323">
    <property type="entry name" value="IGFBP_N_2"/>
    <property type="match status" value="1"/>
</dbReference>
<dbReference type="PROSITE" id="PS50092">
    <property type="entry name" value="TSP1"/>
    <property type="match status" value="1"/>
</dbReference>
<dbReference type="PROSITE" id="PS01208">
    <property type="entry name" value="VWFC_1"/>
    <property type="match status" value="1"/>
</dbReference>
<dbReference type="PROSITE" id="PS50184">
    <property type="entry name" value="VWFC_2"/>
    <property type="match status" value="1"/>
</dbReference>
<keyword id="KW-0025">Alternative splicing</keyword>
<keyword id="KW-0130">Cell adhesion</keyword>
<keyword id="KW-1015">Disulfide bond</keyword>
<keyword id="KW-0325">Glycoprotein</keyword>
<keyword id="KW-1267">Proteomics identification</keyword>
<keyword id="KW-0656">Proto-oncogene</keyword>
<keyword id="KW-1185">Reference proteome</keyword>
<keyword id="KW-0964">Secreted</keyword>
<keyword id="KW-0732">Signal</keyword>
<keyword id="KW-0879">Wnt signaling pathway</keyword>
<comment type="function">
    <text evidence="7 8">Downstream regulator in the Wnt/Frizzled-signaling pathway. Associated with cell survival. Attenuates p53-mediated apoptosis in response to DNA damage through activation of AKT kinase. Up-regulates the anti-apoptotic Bcl-X(L) protein. Adheres to skin and melanoma fibroblasts. In vitro binding to skin fibroblasts occurs through the proteoglycans, decorin and biglycan.</text>
</comment>
<comment type="interaction">
    <interactant intactId="EBI-1050638">
        <id>O95388</id>
    </interactant>
    <interactant intactId="EBI-740785">
        <id>P49639</id>
        <label>HOXA1</label>
    </interactant>
    <organismsDiffer>false</organismsDiffer>
    <experiments>5</experiments>
</comment>
<comment type="interaction">
    <interactant intactId="EBI-1050638">
        <id>O95388</id>
    </interactant>
    <interactant intactId="EBI-740446">
        <id>P32242</id>
        <label>OTX1</label>
    </interactant>
    <organismsDiffer>false</organismsDiffer>
    <experiments>3</experiments>
</comment>
<comment type="interaction">
    <interactant intactId="EBI-25863768">
        <id>O95388-2</id>
    </interactant>
    <interactant intactId="EBI-351506">
        <id>P06396</id>
        <label>GSN</label>
    </interactant>
    <organismsDiffer>false</organismsDiffer>
    <experiments>3</experiments>
</comment>
<comment type="subcellular location">
    <subcellularLocation>
        <location>Secreted</location>
    </subcellularLocation>
</comment>
<comment type="alternative products">
    <event type="alternative splicing"/>
    <isoform>
        <id>O95388-1</id>
        <name>1</name>
        <sequence type="displayed"/>
    </isoform>
    <isoform>
        <id>O95388-2</id>
        <name>2</name>
        <name>WISP1v</name>
        <sequence type="described" ref="VSP_008008 VSP_008009"/>
    </isoform>
    <isoform>
        <id>O95388-3</id>
        <name>3</name>
        <sequence type="described" ref="VSP_042010"/>
    </isoform>
    <isoform>
        <id>O95388-4</id>
        <name>4</name>
        <sequence type="described" ref="VSP_045958 VSP_045959"/>
    </isoform>
    <isoform>
        <id>O95388-5</id>
        <name>5</name>
        <sequence type="described" ref="VSP_047706 VSP_047707"/>
    </isoform>
</comment>
<comment type="tissue specificity">
    <text>Expressed in heart, kidney, lung, pancreas, placenta, ovary, small intestine and spleen. Isoform 2 is expressed predominantly in scirrhous gastric carcinoma and, weakly in placenta. Overexpression is associated with several cancers including breast cancer and colon tumors. Isoform 2 is overexpressed in scirrhous gastric carcinoma.</text>
</comment>
<comment type="similarity">
    <text evidence="12">Belongs to the CCN family.</text>
</comment>
<gene>
    <name evidence="13" type="primary">CCN4</name>
    <name type="synonym">WISP1</name>
</gene>
<proteinExistence type="evidence at protein level"/>